<reference key="1">
    <citation type="journal article" date="2001" name="DNA Res.">
        <title>Prediction of the coding sequences of unidentified human genes. XX. The complete sequences of 100 new cDNA clones from brain which code for large proteins in vitro.</title>
        <authorList>
            <person name="Nagase T."/>
            <person name="Nakayama M."/>
            <person name="Nakajima D."/>
            <person name="Kikuno R."/>
            <person name="Ohara O."/>
        </authorList>
    </citation>
    <scope>NUCLEOTIDE SEQUENCE [LARGE SCALE MRNA]</scope>
    <source>
        <tissue>Brain</tissue>
    </source>
</reference>
<reference key="2">
    <citation type="journal article" date="2004" name="Nat. Genet.">
        <title>Complete sequencing and characterization of 21,243 full-length human cDNAs.</title>
        <authorList>
            <person name="Ota T."/>
            <person name="Suzuki Y."/>
            <person name="Nishikawa T."/>
            <person name="Otsuki T."/>
            <person name="Sugiyama T."/>
            <person name="Irie R."/>
            <person name="Wakamatsu A."/>
            <person name="Hayashi K."/>
            <person name="Sato H."/>
            <person name="Nagai K."/>
            <person name="Kimura K."/>
            <person name="Makita H."/>
            <person name="Sekine M."/>
            <person name="Obayashi M."/>
            <person name="Nishi T."/>
            <person name="Shibahara T."/>
            <person name="Tanaka T."/>
            <person name="Ishii S."/>
            <person name="Yamamoto J."/>
            <person name="Saito K."/>
            <person name="Kawai Y."/>
            <person name="Isono Y."/>
            <person name="Nakamura Y."/>
            <person name="Nagahari K."/>
            <person name="Murakami K."/>
            <person name="Yasuda T."/>
            <person name="Iwayanagi T."/>
            <person name="Wagatsuma M."/>
            <person name="Shiratori A."/>
            <person name="Sudo H."/>
            <person name="Hosoiri T."/>
            <person name="Kaku Y."/>
            <person name="Kodaira H."/>
            <person name="Kondo H."/>
            <person name="Sugawara M."/>
            <person name="Takahashi M."/>
            <person name="Kanda K."/>
            <person name="Yokoi T."/>
            <person name="Furuya T."/>
            <person name="Kikkawa E."/>
            <person name="Omura Y."/>
            <person name="Abe K."/>
            <person name="Kamihara K."/>
            <person name="Katsuta N."/>
            <person name="Sato K."/>
            <person name="Tanikawa M."/>
            <person name="Yamazaki M."/>
            <person name="Ninomiya K."/>
            <person name="Ishibashi T."/>
            <person name="Yamashita H."/>
            <person name="Murakawa K."/>
            <person name="Fujimori K."/>
            <person name="Tanai H."/>
            <person name="Kimata M."/>
            <person name="Watanabe M."/>
            <person name="Hiraoka S."/>
            <person name="Chiba Y."/>
            <person name="Ishida S."/>
            <person name="Ono Y."/>
            <person name="Takiguchi S."/>
            <person name="Watanabe S."/>
            <person name="Yosida M."/>
            <person name="Hotuta T."/>
            <person name="Kusano J."/>
            <person name="Kanehori K."/>
            <person name="Takahashi-Fujii A."/>
            <person name="Hara H."/>
            <person name="Tanase T.-O."/>
            <person name="Nomura Y."/>
            <person name="Togiya S."/>
            <person name="Komai F."/>
            <person name="Hara R."/>
            <person name="Takeuchi K."/>
            <person name="Arita M."/>
            <person name="Imose N."/>
            <person name="Musashino K."/>
            <person name="Yuuki H."/>
            <person name="Oshima A."/>
            <person name="Sasaki N."/>
            <person name="Aotsuka S."/>
            <person name="Yoshikawa Y."/>
            <person name="Matsunawa H."/>
            <person name="Ichihara T."/>
            <person name="Shiohata N."/>
            <person name="Sano S."/>
            <person name="Moriya S."/>
            <person name="Momiyama H."/>
            <person name="Satoh N."/>
            <person name="Takami S."/>
            <person name="Terashima Y."/>
            <person name="Suzuki O."/>
            <person name="Nakagawa S."/>
            <person name="Senoh A."/>
            <person name="Mizoguchi H."/>
            <person name="Goto Y."/>
            <person name="Shimizu F."/>
            <person name="Wakebe H."/>
            <person name="Hishigaki H."/>
            <person name="Watanabe T."/>
            <person name="Sugiyama A."/>
            <person name="Takemoto M."/>
            <person name="Kawakami B."/>
            <person name="Yamazaki M."/>
            <person name="Watanabe K."/>
            <person name="Kumagai A."/>
            <person name="Itakura S."/>
            <person name="Fukuzumi Y."/>
            <person name="Fujimori Y."/>
            <person name="Komiyama M."/>
            <person name="Tashiro H."/>
            <person name="Tanigami A."/>
            <person name="Fujiwara T."/>
            <person name="Ono T."/>
            <person name="Yamada K."/>
            <person name="Fujii Y."/>
            <person name="Ozaki K."/>
            <person name="Hirao M."/>
            <person name="Ohmori Y."/>
            <person name="Kawabata A."/>
            <person name="Hikiji T."/>
            <person name="Kobatake N."/>
            <person name="Inagaki H."/>
            <person name="Ikema Y."/>
            <person name="Okamoto S."/>
            <person name="Okitani R."/>
            <person name="Kawakami T."/>
            <person name="Noguchi S."/>
            <person name="Itoh T."/>
            <person name="Shigeta K."/>
            <person name="Senba T."/>
            <person name="Matsumura K."/>
            <person name="Nakajima Y."/>
            <person name="Mizuno T."/>
            <person name="Morinaga M."/>
            <person name="Sasaki M."/>
            <person name="Togashi T."/>
            <person name="Oyama M."/>
            <person name="Hata H."/>
            <person name="Watanabe M."/>
            <person name="Komatsu T."/>
            <person name="Mizushima-Sugano J."/>
            <person name="Satoh T."/>
            <person name="Shirai Y."/>
            <person name="Takahashi Y."/>
            <person name="Nakagawa K."/>
            <person name="Okumura K."/>
            <person name="Nagase T."/>
            <person name="Nomura N."/>
            <person name="Kikuchi H."/>
            <person name="Masuho Y."/>
            <person name="Yamashita R."/>
            <person name="Nakai K."/>
            <person name="Yada T."/>
            <person name="Nakamura Y."/>
            <person name="Ohara O."/>
            <person name="Isogai T."/>
            <person name="Sugano S."/>
        </authorList>
    </citation>
    <scope>NUCLEOTIDE SEQUENCE [LARGE SCALE MRNA]</scope>
    <source>
        <tissue>Brain</tissue>
    </source>
</reference>
<reference key="3">
    <citation type="journal article" date="2004" name="Genome Res.">
        <title>The status, quality, and expansion of the NIH full-length cDNA project: the Mammalian Gene Collection (MGC).</title>
        <authorList>
            <consortium name="The MGC Project Team"/>
        </authorList>
    </citation>
    <scope>NUCLEOTIDE SEQUENCE [LARGE SCALE MRNA]</scope>
</reference>
<reference key="4">
    <citation type="journal article" date="2003" name="Int. J. Cancer">
        <title>Novel tumor antigens identified by autologous antibody screening of childhood medulloblastoma cDNA libraries.</title>
        <authorList>
            <person name="Behrends U."/>
            <person name="Schneider I."/>
            <person name="Roessler S."/>
            <person name="Frauenknecht H."/>
            <person name="Golbeck A."/>
            <person name="Lechner B."/>
            <person name="Eigenstetter G."/>
            <person name="Zobywalski C."/>
            <person name="Mueller-Weihrich S."/>
            <person name="Graubner U."/>
            <person name="Schmid I."/>
            <person name="Sackerer D."/>
            <person name="Spaeth M."/>
            <person name="Goetz C."/>
            <person name="Prantl F."/>
            <person name="Asmuss H.-P."/>
            <person name="Bise K."/>
            <person name="Mautner J."/>
        </authorList>
    </citation>
    <scope>NUCLEOTIDE SEQUENCE [MRNA] OF 522-611</scope>
    <scope>TISSUE SPECIFICITY</scope>
    <source>
        <tissue>Medulloblastoma</tissue>
    </source>
</reference>
<reference key="5">
    <citation type="journal article" date="2009" name="Cell">
        <title>Regulation of vertebrate nervous system alternative splicing and development by an SR-related protein.</title>
        <authorList>
            <person name="Calarco J.A."/>
            <person name="Superina S."/>
            <person name="O'Hanlon D."/>
            <person name="Gabut M."/>
            <person name="Raj B."/>
            <person name="Pan Q."/>
            <person name="Skalska U."/>
            <person name="Clarke L."/>
            <person name="Gelinas D."/>
            <person name="van der Kooy D."/>
            <person name="Zhen M."/>
            <person name="Ciruna B."/>
            <person name="Blencowe B.J."/>
        </authorList>
    </citation>
    <scope>TISSUE SPECIFICITY</scope>
</reference>
<reference key="6">
    <citation type="journal article" date="2019" name="Neurosci. Lett.">
        <title>Loss of nuclear REST/NRSF in aged-dopaminergic neurons in Parkinson's disease patients.</title>
        <authorList>
            <person name="Kawamura M."/>
            <person name="Sato S."/>
            <person name="Matsumoto G."/>
            <person name="Fukuda T."/>
            <person name="Shiba-Fukushima K."/>
            <person name="Noda S."/>
            <person name="Takanashi M."/>
            <person name="Mori N."/>
            <person name="Hattori N."/>
        </authorList>
    </citation>
    <scope>FUNCTION</scope>
</reference>
<accession>A7MD48</accession>
<accession>A8K5P6</accession>
<accession>B2RZH7</accession>
<accession>Q7Z5F0</accession>
<accession>Q96JH4</accession>
<evidence type="ECO:0000250" key="1">
    <source>
        <dbReference type="UniProtKB" id="Q8BKA3"/>
    </source>
</evidence>
<evidence type="ECO:0000256" key="2">
    <source>
        <dbReference type="SAM" id="MobiDB-lite"/>
    </source>
</evidence>
<evidence type="ECO:0000269" key="3">
    <source>
    </source>
</evidence>
<evidence type="ECO:0000269" key="4">
    <source>
    </source>
</evidence>
<evidence type="ECO:0000269" key="5">
    <source>
    </source>
</evidence>
<evidence type="ECO:0000305" key="6"/>
<gene>
    <name type="primary">SRRM4</name>
    <name type="synonym">KIAA1853</name>
</gene>
<comment type="function">
    <text evidence="1 5">Splicing factor specifically required for neural cell differentiation. Acts in conjunction with nPTB/PTBP2 by binding directly to its regulated target transcripts and promotes neural-specific exon inclusion in many genes that function in neural cell differentiation. Required to promote the inclusion of neural-specific exon 10 in nPTB/PTBP2, leading to increased expression of neural-specific nPTB/PTBP2. Also promotes the inclusion of exon 16 in DAAM1 in neuron extracts (By similarity). Promotes alternative splicing of REST transcripts to produce REST isoform 3 (REST4) with greatly reduced repressive activity, thereby activating expression of REST targets in neural cells (PubMed:30684677). Plays an important role during embryonic development as well as in the proper functioning of the adult nervous system. Regulates alternative splicing events in genes with important neuronal functions (By similarity).</text>
</comment>
<comment type="interaction">
    <interactant intactId="EBI-3867173">
        <id>A7MD48</id>
    </interactant>
    <interactant intactId="EBI-1042725">
        <id>Q02040</id>
        <label>AKAP17A</label>
    </interactant>
    <organismsDiffer>false</organismsDiffer>
    <experiments>3</experiments>
</comment>
<comment type="interaction">
    <interactant intactId="EBI-3867173">
        <id>A7MD48</id>
    </interactant>
    <interactant intactId="EBI-12248874">
        <id>A0A0C4DG62</id>
        <label>ARL6IP4</label>
    </interactant>
    <organismsDiffer>false</organismsDiffer>
    <experiments>3</experiments>
</comment>
<comment type="interaction">
    <interactant intactId="EBI-3867173">
        <id>A7MD48</id>
    </interactant>
    <interactant intactId="EBI-6598617">
        <id>Q6PH81</id>
        <label>C16orf87</label>
    </interactant>
    <organismsDiffer>false</organismsDiffer>
    <experiments>3</experiments>
</comment>
<comment type="interaction">
    <interactant intactId="EBI-3867173">
        <id>A7MD48</id>
    </interactant>
    <interactant intactId="EBI-295634">
        <id>Q16543</id>
        <label>CDC37</label>
    </interactant>
    <organismsDiffer>false</organismsDiffer>
    <experiments>3</experiments>
</comment>
<comment type="interaction">
    <interactant intactId="EBI-3867173">
        <id>A7MD48</id>
    </interactant>
    <interactant intactId="EBI-11981867">
        <id>P49759-3</id>
        <label>CLK1</label>
    </interactant>
    <organismsDiffer>false</organismsDiffer>
    <experiments>3</experiments>
</comment>
<comment type="interaction">
    <interactant intactId="EBI-3867173">
        <id>A7MD48</id>
    </interactant>
    <interactant intactId="EBI-633400">
        <id>Q9HAZ1</id>
        <label>CLK4</label>
    </interactant>
    <organismsDiffer>false</organismsDiffer>
    <experiments>3</experiments>
</comment>
<comment type="interaction">
    <interactant intactId="EBI-3867173">
        <id>A7MD48</id>
    </interactant>
    <interactant intactId="EBI-10175124">
        <id>Q8IZU0</id>
        <label>FAM9B</label>
    </interactant>
    <organismsDiffer>false</organismsDiffer>
    <experiments>3</experiments>
</comment>
<comment type="interaction">
    <interactant intactId="EBI-3867173">
        <id>A7MD48</id>
    </interactant>
    <interactant intactId="EBI-352851">
        <id>Q9Y383</id>
        <label>LUC7L2</label>
    </interactant>
    <organismsDiffer>false</organismsDiffer>
    <experiments>6</experiments>
</comment>
<comment type="interaction">
    <interactant intactId="EBI-3867173">
        <id>A7MD48</id>
    </interactant>
    <interactant intactId="EBI-10198848">
        <id>Q9P127</id>
        <label>LUZP4</label>
    </interactant>
    <organismsDiffer>false</organismsDiffer>
    <experiments>3</experiments>
</comment>
<comment type="interaction">
    <interactant intactId="EBI-3867173">
        <id>A7MD48</id>
    </interactant>
    <interactant intactId="EBI-348259">
        <id>Q96EZ8</id>
        <label>MCRS1</label>
    </interactant>
    <organismsDiffer>false</organismsDiffer>
    <experiments>3</experiments>
</comment>
<comment type="interaction">
    <interactant intactId="EBI-3867173">
        <id>A7MD48</id>
    </interactant>
    <interactant intactId="EBI-742459">
        <id>Q9BU76</id>
        <label>MMTAG2</label>
    </interactant>
    <organismsDiffer>false</organismsDiffer>
    <experiments>3</experiments>
</comment>
<comment type="interaction">
    <interactant intactId="EBI-3867173">
        <id>A7MD48</id>
    </interactant>
    <interactant intactId="EBI-2211856">
        <id>P49756</id>
        <label>RBM25</label>
    </interactant>
    <organismsDiffer>false</organismsDiffer>
    <experiments>3</experiments>
</comment>
<comment type="interaction">
    <interactant intactId="EBI-3867173">
        <id>A7MD48</id>
    </interactant>
    <interactant intactId="EBI-395290">
        <id>Q14498</id>
        <label>RBM39</label>
    </interactant>
    <organismsDiffer>false</organismsDiffer>
    <experiments>3</experiments>
</comment>
<comment type="interaction">
    <interactant intactId="EBI-3867173">
        <id>A7MD48</id>
    </interactant>
    <interactant intactId="EBI-7704044">
        <id>Q9Y388</id>
        <label>RBMX2</label>
    </interactant>
    <organismsDiffer>false</organismsDiffer>
    <experiments>3</experiments>
</comment>
<comment type="interaction">
    <interactant intactId="EBI-3867173">
        <id>A7MD48</id>
    </interactant>
    <interactant intactId="EBI-395959">
        <id>Q15287</id>
        <label>RNPS1</label>
    </interactant>
    <organismsDiffer>false</organismsDiffer>
    <experiments>3</experiments>
</comment>
<comment type="interaction">
    <interactant intactId="EBI-3867173">
        <id>A7MD48</id>
    </interactant>
    <interactant intactId="EBI-712189">
        <id>Q96IZ7</id>
        <label>RSRC1</label>
    </interactant>
    <organismsDiffer>false</organismsDiffer>
    <experiments>3</experiments>
</comment>
<comment type="interaction">
    <interactant intactId="EBI-3867173">
        <id>A7MD48</id>
    </interactant>
    <interactant intactId="EBI-749336">
        <id>Q8TAD8</id>
        <label>SNIP1</label>
    </interactant>
    <organismsDiffer>false</organismsDiffer>
    <experiments>6</experiments>
</comment>
<comment type="interaction">
    <interactant intactId="EBI-3867173">
        <id>A7MD48</id>
    </interactant>
    <interactant intactId="EBI-1049228">
        <id>P08621</id>
        <label>SNRNP70</label>
    </interactant>
    <organismsDiffer>false</organismsDiffer>
    <experiments>3</experiments>
</comment>
<comment type="interaction">
    <interactant intactId="EBI-3867173">
        <id>A7MD48</id>
    </interactant>
    <interactant intactId="EBI-1055880">
        <id>Q8IYB3</id>
        <label>SRRM1</label>
    </interactant>
    <organismsDiffer>false</organismsDiffer>
    <experiments>3</experiments>
</comment>
<comment type="interaction">
    <interactant intactId="EBI-3867173">
        <id>A7MD48</id>
    </interactant>
    <interactant intactId="EBI-3867173">
        <id>A7MD48</id>
        <label>SRRM4</label>
    </interactant>
    <organismsDiffer>false</organismsDiffer>
    <experiments>3</experiments>
</comment>
<comment type="interaction">
    <interactant intactId="EBI-3867173">
        <id>A7MD48</id>
    </interactant>
    <interactant intactId="EBI-11975029">
        <id>Q05519-2</id>
        <label>SRSF11</label>
    </interactant>
    <organismsDiffer>false</organismsDiffer>
    <experiments>3</experiments>
</comment>
<comment type="interaction">
    <interactant intactId="EBI-3867173">
        <id>A7MD48</id>
    </interactant>
    <interactant intactId="EBI-632461">
        <id>Q01081</id>
        <label>U2AF1</label>
    </interactant>
    <organismsDiffer>false</organismsDiffer>
    <experiments>3</experiments>
</comment>
<comment type="interaction">
    <interactant intactId="EBI-3867173">
        <id>A7MD48</id>
    </interactant>
    <interactant intactId="EBI-540834">
        <id>P61964</id>
        <label>WDR5</label>
    </interactant>
    <organismsDiffer>false</organismsDiffer>
    <experiments>3</experiments>
</comment>
<comment type="interaction">
    <interactant intactId="EBI-3867173">
        <id>A7MD48</id>
    </interactant>
    <interactant intactId="EBI-2555767">
        <id>Q15973</id>
        <label>ZNF124</label>
    </interactant>
    <organismsDiffer>false</organismsDiffer>
    <experiments>3</experiments>
</comment>
<comment type="interaction">
    <interactant intactId="EBI-3867173">
        <id>A7MD48</id>
    </interactant>
    <interactant intactId="EBI-10754950">
        <id>Q9HBT8</id>
        <label>ZNF286A</label>
    </interactant>
    <organismsDiffer>false</organismsDiffer>
    <experiments>3</experiments>
</comment>
<comment type="interaction">
    <interactant intactId="EBI-3867173">
        <id>A7MD48</id>
    </interactant>
    <interactant intactId="EBI-10217363">
        <id>Q32M78</id>
        <label>ZNF699</label>
    </interactant>
    <organismsDiffer>false</organismsDiffer>
    <experiments>3</experiments>
</comment>
<comment type="interaction">
    <interactant intactId="EBI-3867173">
        <id>A7MD48</id>
    </interactant>
    <interactant intactId="EBI-6657923">
        <id>Q15696</id>
        <label>ZRSR2</label>
    </interactant>
    <organismsDiffer>false</organismsDiffer>
    <experiments>3</experiments>
</comment>
<comment type="interaction">
    <interactant intactId="EBI-3867173">
        <id>A7MD48</id>
    </interactant>
    <interactant intactId="EBI-12270264">
        <id>Q15695</id>
        <label>ZRSR2P1</label>
    </interactant>
    <organismsDiffer>false</organismsDiffer>
    <experiments>3</experiments>
</comment>
<comment type="subcellular location">
    <subcellularLocation>
        <location evidence="1">Nucleus</location>
    </subcellularLocation>
</comment>
<comment type="tissue specificity">
    <text evidence="3 4">Specifically expressed in neuronal cells (at protein level). Expressed in the cerebellum.</text>
</comment>
<comment type="PTM">
    <text evidence="1">Phosphorylated.</text>
</comment>
<comment type="similarity">
    <text evidence="6">Belongs to the nSR100 family.</text>
</comment>
<comment type="sequence caution" evidence="6">
    <conflict type="erroneous initiation">
        <sequence resource="EMBL-CDS" id="BAB47482"/>
    </conflict>
</comment>
<name>SRRM4_HUMAN</name>
<feature type="chain" id="PRO_0000311911" description="Serine/arginine repetitive matrix protein 4">
    <location>
        <begin position="1"/>
        <end position="611"/>
    </location>
</feature>
<feature type="region of interest" description="Disordered" evidence="2">
    <location>
        <begin position="38"/>
        <end position="248"/>
    </location>
</feature>
<feature type="region of interest" description="Disordered" evidence="2">
    <location>
        <begin position="263"/>
        <end position="611"/>
    </location>
</feature>
<feature type="compositionally biased region" description="Basic residues" evidence="2">
    <location>
        <begin position="107"/>
        <end position="123"/>
    </location>
</feature>
<feature type="compositionally biased region" description="Basic residues" evidence="2">
    <location>
        <begin position="131"/>
        <end position="189"/>
    </location>
</feature>
<feature type="compositionally biased region" description="Low complexity" evidence="2">
    <location>
        <begin position="190"/>
        <end position="202"/>
    </location>
</feature>
<feature type="compositionally biased region" description="Basic and acidic residues" evidence="2">
    <location>
        <begin position="203"/>
        <end position="216"/>
    </location>
</feature>
<feature type="compositionally biased region" description="Basic residues" evidence="2">
    <location>
        <begin position="217"/>
        <end position="226"/>
    </location>
</feature>
<feature type="compositionally biased region" description="Polar residues" evidence="2">
    <location>
        <begin position="270"/>
        <end position="290"/>
    </location>
</feature>
<feature type="compositionally biased region" description="Low complexity" evidence="2">
    <location>
        <begin position="291"/>
        <end position="301"/>
    </location>
</feature>
<feature type="compositionally biased region" description="Polar residues" evidence="2">
    <location>
        <begin position="322"/>
        <end position="341"/>
    </location>
</feature>
<feature type="compositionally biased region" description="Low complexity" evidence="2">
    <location>
        <begin position="390"/>
        <end position="422"/>
    </location>
</feature>
<feature type="compositionally biased region" description="Low complexity" evidence="2">
    <location>
        <begin position="430"/>
        <end position="461"/>
    </location>
</feature>
<feature type="compositionally biased region" description="Basic and acidic residues" evidence="2">
    <location>
        <begin position="462"/>
        <end position="482"/>
    </location>
</feature>
<feature type="compositionally biased region" description="Basic residues" evidence="2">
    <location>
        <begin position="483"/>
        <end position="498"/>
    </location>
</feature>
<feature type="compositionally biased region" description="Basic and acidic residues" evidence="2">
    <location>
        <begin position="499"/>
        <end position="508"/>
    </location>
</feature>
<feature type="compositionally biased region" description="Low complexity" evidence="2">
    <location>
        <begin position="522"/>
        <end position="549"/>
    </location>
</feature>
<feature type="compositionally biased region" description="Basic residues" evidence="2">
    <location>
        <begin position="550"/>
        <end position="564"/>
    </location>
</feature>
<feature type="compositionally biased region" description="Low complexity" evidence="2">
    <location>
        <begin position="565"/>
        <end position="580"/>
    </location>
</feature>
<feature type="compositionally biased region" description="Basic residues" evidence="2">
    <location>
        <begin position="581"/>
        <end position="595"/>
    </location>
</feature>
<feature type="compositionally biased region" description="Low complexity" evidence="2">
    <location>
        <begin position="596"/>
        <end position="611"/>
    </location>
</feature>
<feature type="sequence variant" id="VAR_037339" description="In dbSNP:rs7297606.">
    <original>S</original>
    <variation>N</variation>
    <location>
        <position position="243"/>
    </location>
</feature>
<feature type="sequence variant" id="VAR_037340" description="In dbSNP:rs2723880.">
    <original>R</original>
    <variation>Q</variation>
    <location>
        <position position="406"/>
    </location>
</feature>
<feature type="sequence variant" id="VAR_037341" description="In dbSNP:rs2555273.">
    <original>R</original>
    <variation>S</variation>
    <location>
        <position position="547"/>
    </location>
</feature>
<feature type="sequence conflict" description="In Ref. 1; BAB47482 and 3; AAI52472/AAI67162/AAI67163." evidence="6" ref="1 3">
    <original>R</original>
    <variation>W</variation>
    <location>
        <position position="553"/>
    </location>
</feature>
<keyword id="KW-0221">Differentiation</keyword>
<keyword id="KW-0507">mRNA processing</keyword>
<keyword id="KW-0508">mRNA splicing</keyword>
<keyword id="KW-0539">Nucleus</keyword>
<keyword id="KW-0597">Phosphoprotein</keyword>
<keyword id="KW-1267">Proteomics identification</keyword>
<keyword id="KW-1185">Reference proteome</keyword>
<keyword id="KW-0694">RNA-binding</keyword>
<protein>
    <recommendedName>
        <fullName>Serine/arginine repetitive matrix protein 4</fullName>
    </recommendedName>
    <alternativeName>
        <fullName>Medulloblastoma antigen MU-MB-2.76</fullName>
    </alternativeName>
    <alternativeName>
        <fullName>Neural-specific serine/arginine repetitive splicing factor of 100 kDa</fullName>
        <shortName>Neural-specific SR-related protein of 100 kDa</shortName>
        <shortName>nSR100</shortName>
    </alternativeName>
</protein>
<dbReference type="EMBL" id="AB058756">
    <property type="protein sequence ID" value="BAB47482.1"/>
    <property type="status" value="ALT_INIT"/>
    <property type="molecule type" value="mRNA"/>
</dbReference>
<dbReference type="EMBL" id="AK291361">
    <property type="protein sequence ID" value="BAF84050.1"/>
    <property type="molecule type" value="mRNA"/>
</dbReference>
<dbReference type="EMBL" id="AC087885">
    <property type="status" value="NOT_ANNOTATED_CDS"/>
    <property type="molecule type" value="Genomic_DNA"/>
</dbReference>
<dbReference type="EMBL" id="AC084361">
    <property type="status" value="NOT_ANNOTATED_CDS"/>
    <property type="molecule type" value="Genomic_DNA"/>
</dbReference>
<dbReference type="EMBL" id="BC152471">
    <property type="protein sequence ID" value="AAI52472.1"/>
    <property type="molecule type" value="mRNA"/>
</dbReference>
<dbReference type="EMBL" id="BC167162">
    <property type="protein sequence ID" value="AAI67162.1"/>
    <property type="molecule type" value="mRNA"/>
</dbReference>
<dbReference type="EMBL" id="BC167163">
    <property type="protein sequence ID" value="AAI67163.1"/>
    <property type="molecule type" value="mRNA"/>
</dbReference>
<dbReference type="EMBL" id="AY130006">
    <property type="protein sequence ID" value="AAN05090.1"/>
    <property type="molecule type" value="mRNA"/>
</dbReference>
<dbReference type="CCDS" id="CCDS44994.1"/>
<dbReference type="RefSeq" id="NP_919262.2">
    <property type="nucleotide sequence ID" value="NM_194286.4"/>
</dbReference>
<dbReference type="BioGRID" id="124121">
    <property type="interactions" value="43"/>
</dbReference>
<dbReference type="FunCoup" id="A7MD48">
    <property type="interactions" value="528"/>
</dbReference>
<dbReference type="IntAct" id="A7MD48">
    <property type="interactions" value="28"/>
</dbReference>
<dbReference type="STRING" id="9606.ENSP00000267260"/>
<dbReference type="GlyGen" id="A7MD48">
    <property type="glycosylation" value="1 site, 1 O-linked glycan (1 site)"/>
</dbReference>
<dbReference type="iPTMnet" id="A7MD48"/>
<dbReference type="PhosphoSitePlus" id="A7MD48"/>
<dbReference type="BioMuta" id="SRRM4"/>
<dbReference type="MassIVE" id="A7MD48"/>
<dbReference type="PaxDb" id="9606-ENSP00000267260"/>
<dbReference type="PeptideAtlas" id="A7MD48"/>
<dbReference type="ProteomicsDB" id="1812"/>
<dbReference type="Antibodypedia" id="56195">
    <property type="antibodies" value="52 antibodies from 14 providers"/>
</dbReference>
<dbReference type="DNASU" id="84530"/>
<dbReference type="Ensembl" id="ENST00000267260.5">
    <property type="protein sequence ID" value="ENSP00000267260.4"/>
    <property type="gene ID" value="ENSG00000139767.10"/>
</dbReference>
<dbReference type="GeneID" id="84530"/>
<dbReference type="KEGG" id="hsa:84530"/>
<dbReference type="MANE-Select" id="ENST00000267260.5">
    <property type="protein sequence ID" value="ENSP00000267260.4"/>
    <property type="RefSeq nucleotide sequence ID" value="NM_194286.4"/>
    <property type="RefSeq protein sequence ID" value="NP_919262.2"/>
</dbReference>
<dbReference type="AGR" id="HGNC:29389"/>
<dbReference type="CTD" id="84530"/>
<dbReference type="DisGeNET" id="84530"/>
<dbReference type="GeneCards" id="SRRM4"/>
<dbReference type="HGNC" id="HGNC:29389">
    <property type="gene designation" value="SRRM4"/>
</dbReference>
<dbReference type="HPA" id="ENSG00000139767">
    <property type="expression patterns" value="Group enriched (brain, retina)"/>
</dbReference>
<dbReference type="MIM" id="613103">
    <property type="type" value="gene"/>
</dbReference>
<dbReference type="neXtProt" id="NX_A7MD48"/>
<dbReference type="OpenTargets" id="ENSG00000139767"/>
<dbReference type="PharmGKB" id="PA165513415"/>
<dbReference type="VEuPathDB" id="HostDB:ENSG00000139767"/>
<dbReference type="eggNOG" id="ENOG502QSPB">
    <property type="taxonomic scope" value="Eukaryota"/>
</dbReference>
<dbReference type="GeneTree" id="ENSGT00730000111247"/>
<dbReference type="HOGENOM" id="CLU_032561_1_0_1"/>
<dbReference type="InParanoid" id="A7MD48"/>
<dbReference type="OMA" id="RHHLQKS"/>
<dbReference type="OrthoDB" id="9950700at2759"/>
<dbReference type="PAN-GO" id="A7MD48">
    <property type="GO annotations" value="5 GO annotations based on evolutionary models"/>
</dbReference>
<dbReference type="PhylomeDB" id="A7MD48"/>
<dbReference type="PathwayCommons" id="A7MD48"/>
<dbReference type="SignaLink" id="A7MD48"/>
<dbReference type="BioGRID-ORCS" id="84530">
    <property type="hits" value="32 hits in 1138 CRISPR screens"/>
</dbReference>
<dbReference type="ChiTaRS" id="SRRM4">
    <property type="organism name" value="human"/>
</dbReference>
<dbReference type="GenomeRNAi" id="84530"/>
<dbReference type="Pharos" id="A7MD48">
    <property type="development level" value="Tbio"/>
</dbReference>
<dbReference type="PRO" id="PR:A7MD48"/>
<dbReference type="Proteomes" id="UP000005640">
    <property type="component" value="Chromosome 12"/>
</dbReference>
<dbReference type="RNAct" id="A7MD48">
    <property type="molecule type" value="protein"/>
</dbReference>
<dbReference type="Bgee" id="ENSG00000139767">
    <property type="expression patterns" value="Expressed in cerebellar vermis and 129 other cell types or tissues"/>
</dbReference>
<dbReference type="ExpressionAtlas" id="A7MD48">
    <property type="expression patterns" value="baseline and differential"/>
</dbReference>
<dbReference type="GO" id="GO:0005634">
    <property type="term" value="C:nucleus"/>
    <property type="evidence" value="ECO:0000250"/>
    <property type="project" value="UniProtKB"/>
</dbReference>
<dbReference type="GO" id="GO:0042802">
    <property type="term" value="F:identical protein binding"/>
    <property type="evidence" value="ECO:0000353"/>
    <property type="project" value="IntAct"/>
</dbReference>
<dbReference type="GO" id="GO:0003729">
    <property type="term" value="F:mRNA binding"/>
    <property type="evidence" value="ECO:0000250"/>
    <property type="project" value="UniProtKB"/>
</dbReference>
<dbReference type="GO" id="GO:0030154">
    <property type="term" value="P:cell differentiation"/>
    <property type="evidence" value="ECO:0000250"/>
    <property type="project" value="UniProtKB"/>
</dbReference>
<dbReference type="GO" id="GO:0006397">
    <property type="term" value="P:mRNA processing"/>
    <property type="evidence" value="ECO:0000250"/>
    <property type="project" value="UniProtKB"/>
</dbReference>
<dbReference type="GO" id="GO:0007399">
    <property type="term" value="P:nervous system development"/>
    <property type="evidence" value="ECO:0000250"/>
    <property type="project" value="UniProtKB"/>
</dbReference>
<dbReference type="GO" id="GO:0042551">
    <property type="term" value="P:neuron maturation"/>
    <property type="evidence" value="ECO:0000318"/>
    <property type="project" value="GO_Central"/>
</dbReference>
<dbReference type="GO" id="GO:0000381">
    <property type="term" value="P:regulation of alternative mRNA splicing, via spliceosome"/>
    <property type="evidence" value="ECO:0000314"/>
    <property type="project" value="UniProtKB"/>
</dbReference>
<dbReference type="GO" id="GO:0043484">
    <property type="term" value="P:regulation of RNA splicing"/>
    <property type="evidence" value="ECO:0000250"/>
    <property type="project" value="UniProtKB"/>
</dbReference>
<dbReference type="GO" id="GO:0008380">
    <property type="term" value="P:RNA splicing"/>
    <property type="evidence" value="ECO:0007669"/>
    <property type="project" value="UniProtKB-KW"/>
</dbReference>
<dbReference type="GO" id="GO:0007605">
    <property type="term" value="P:sensory perception of sound"/>
    <property type="evidence" value="ECO:0007669"/>
    <property type="project" value="Ensembl"/>
</dbReference>
<dbReference type="InterPro" id="IPR029360">
    <property type="entry name" value="SRRM_C"/>
</dbReference>
<dbReference type="InterPro" id="IPR052109">
    <property type="entry name" value="SRRM_Domain-Containing"/>
</dbReference>
<dbReference type="PANTHER" id="PTHR34755">
    <property type="entry name" value="SERINE/ARGININE REPETITIVE MATRIX PROTEIN 3-RELATED"/>
    <property type="match status" value="1"/>
</dbReference>
<dbReference type="PANTHER" id="PTHR34755:SF1">
    <property type="entry name" value="SERINE_ARGININE REPETITIVE MATRIX PROTEIN 4"/>
    <property type="match status" value="1"/>
</dbReference>
<dbReference type="Pfam" id="PF15230">
    <property type="entry name" value="SRRM_C"/>
    <property type="match status" value="1"/>
</dbReference>
<proteinExistence type="evidence at protein level"/>
<sequence length="611" mass="68559">MASVQQGEKQLFEKFWRGTFKAVATPRPESIIVASITARKPLPRTEPQNNPVVPAQDGPSEKLGQHLATEPLGTNSWERDKTCRELGATRGHSASHDKDLTPPPSSRGKKKKKKSTRKKRRRSSSYSPSPVKKKKKKSSKKHKRRRSFSKKRRHSSSSPKSKRRDEKRHKKQSRSRPRKSHRHRHHRCPSRSQSSESRPSSCESRHRGRSPEEGQKSRRRHSRRCSKTLCKDSPEAQSSRPPSQPLQMLGYLSARGVITGSGSAADLFTKTASPLTTSRGRSQEYDSGNDTSSPPSTQTSSARSRGQEKGSPSGGLSKSRELNSGNTSDSGNSFTTSSPQNKGAMLENLSPTSRGRESRGFQSPCLECAEVKKSSLVPSTARSSPMKGCSRSSSYASTRSSSHSSRSPNPRASPRYTQSRSTSSEKRSYSRSPSYSSKSGKRSPPSRSSRSRRSPSYSRYSPSRERDPKYSEKDSQQRERERARRRRRSYSPMRKRRRDSPSHLEARRITSARKRPIPYYRPSPSSSGSLSSTSSWYSSSSSRSASRSYSRSRSRSRSRRRSRTRTSSSSSSRSPSPGSRSRSRSRSRSRSRSRSQSRSYSSADSYSSTRR</sequence>
<organism>
    <name type="scientific">Homo sapiens</name>
    <name type="common">Human</name>
    <dbReference type="NCBI Taxonomy" id="9606"/>
    <lineage>
        <taxon>Eukaryota</taxon>
        <taxon>Metazoa</taxon>
        <taxon>Chordata</taxon>
        <taxon>Craniata</taxon>
        <taxon>Vertebrata</taxon>
        <taxon>Euteleostomi</taxon>
        <taxon>Mammalia</taxon>
        <taxon>Eutheria</taxon>
        <taxon>Euarchontoglires</taxon>
        <taxon>Primates</taxon>
        <taxon>Haplorrhini</taxon>
        <taxon>Catarrhini</taxon>
        <taxon>Hominidae</taxon>
        <taxon>Homo</taxon>
    </lineage>
</organism>